<gene>
    <name evidence="1" type="primary">lipA</name>
    <name type="ordered locus">ckrop_0698</name>
</gene>
<accession>C4LI04</accession>
<evidence type="ECO:0000255" key="1">
    <source>
        <dbReference type="HAMAP-Rule" id="MF_00206"/>
    </source>
</evidence>
<evidence type="ECO:0000255" key="2">
    <source>
        <dbReference type="PROSITE-ProRule" id="PRU01266"/>
    </source>
</evidence>
<reference key="1">
    <citation type="journal article" date="2008" name="J. Biotechnol.">
        <title>Ultrafast pyrosequencing of Corynebacterium kroppenstedtii DSM44385 revealed insights into the physiology of a lipophilic corynebacterium that lacks mycolic acids.</title>
        <authorList>
            <person name="Tauch A."/>
            <person name="Schneider J."/>
            <person name="Szczepanowski R."/>
            <person name="Tilker A."/>
            <person name="Viehoever P."/>
            <person name="Gartemann K.-H."/>
            <person name="Arnold W."/>
            <person name="Blom J."/>
            <person name="Brinkrolf K."/>
            <person name="Brune I."/>
            <person name="Goetker S."/>
            <person name="Weisshaar B."/>
            <person name="Goesmann A."/>
            <person name="Droege M."/>
            <person name="Puehler A."/>
        </authorList>
    </citation>
    <scope>NUCLEOTIDE SEQUENCE [LARGE SCALE GENOMIC DNA]</scope>
    <source>
        <strain>DSM 44385 / JCM 11950 / CIP 105744 / CCUG 35717</strain>
    </source>
</reference>
<name>LIPA_CORK4</name>
<comment type="function">
    <text evidence="1">Catalyzes the radical-mediated insertion of two sulfur atoms into the C-6 and C-8 positions of the octanoyl moiety bound to the lipoyl domains of lipoate-dependent enzymes, thereby converting the octanoylated domains into lipoylated derivatives.</text>
</comment>
<comment type="catalytic activity">
    <reaction evidence="1">
        <text>[[Fe-S] cluster scaffold protein carrying a second [4Fe-4S](2+) cluster] + N(6)-octanoyl-L-lysyl-[protein] + 2 oxidized [2Fe-2S]-[ferredoxin] + 2 S-adenosyl-L-methionine + 4 H(+) = [[Fe-S] cluster scaffold protein] + N(6)-[(R)-dihydrolipoyl]-L-lysyl-[protein] + 4 Fe(3+) + 2 hydrogen sulfide + 2 5'-deoxyadenosine + 2 L-methionine + 2 reduced [2Fe-2S]-[ferredoxin]</text>
        <dbReference type="Rhea" id="RHEA:16585"/>
        <dbReference type="Rhea" id="RHEA-COMP:9928"/>
        <dbReference type="Rhea" id="RHEA-COMP:10000"/>
        <dbReference type="Rhea" id="RHEA-COMP:10001"/>
        <dbReference type="Rhea" id="RHEA-COMP:10475"/>
        <dbReference type="Rhea" id="RHEA-COMP:14568"/>
        <dbReference type="Rhea" id="RHEA-COMP:14569"/>
        <dbReference type="ChEBI" id="CHEBI:15378"/>
        <dbReference type="ChEBI" id="CHEBI:17319"/>
        <dbReference type="ChEBI" id="CHEBI:29034"/>
        <dbReference type="ChEBI" id="CHEBI:29919"/>
        <dbReference type="ChEBI" id="CHEBI:33722"/>
        <dbReference type="ChEBI" id="CHEBI:33737"/>
        <dbReference type="ChEBI" id="CHEBI:33738"/>
        <dbReference type="ChEBI" id="CHEBI:57844"/>
        <dbReference type="ChEBI" id="CHEBI:59789"/>
        <dbReference type="ChEBI" id="CHEBI:78809"/>
        <dbReference type="ChEBI" id="CHEBI:83100"/>
        <dbReference type="EC" id="2.8.1.8"/>
    </reaction>
</comment>
<comment type="cofactor">
    <cofactor evidence="1">
        <name>[4Fe-4S] cluster</name>
        <dbReference type="ChEBI" id="CHEBI:49883"/>
    </cofactor>
    <text evidence="1">Binds 2 [4Fe-4S] clusters per subunit. One cluster is coordinated with 3 cysteines and an exchangeable S-adenosyl-L-methionine.</text>
</comment>
<comment type="pathway">
    <text evidence="1">Protein modification; protein lipoylation via endogenous pathway; protein N(6)-(lipoyl)lysine from octanoyl-[acyl-carrier-protein]: step 2/2.</text>
</comment>
<comment type="subcellular location">
    <subcellularLocation>
        <location evidence="1">Cytoplasm</location>
    </subcellularLocation>
</comment>
<comment type="similarity">
    <text evidence="1">Belongs to the radical SAM superfamily. Lipoyl synthase family.</text>
</comment>
<sequence length="347" mass="39087">MAVAPNGRRLLRIEARNAQTPIEAKPRWIRTTATMGPEFRDMKKRVKGAGLHTVCQEAGCPNIHECWEDREATFLIGGDTCSRRCDFCDIKSGRPEPLDEDEPRRVAENVREIGLRYSTITGVTRDDLPDEGAWLYAEVVRQIHKLNPNTGVENLTPDFSGKPDLLQTVFEARPEVFAHNLETVPRIFKRIRPAFRYERSLDVIRQARDFGLVTKSNLILGMGETVDEVKSAMRDLRDAGCDILTVTQYLRPSNLHHPIERWVKPEEFVMYRDYGHDIGFAGVMAGPLVRSSYRAGRLYAQAIKARGEELPANLQHLGEGIDDTASQEASTLLSKYGASRETPVGAR</sequence>
<dbReference type="EC" id="2.8.1.8" evidence="1"/>
<dbReference type="EMBL" id="CP001620">
    <property type="protein sequence ID" value="ACR17459.1"/>
    <property type="molecule type" value="Genomic_DNA"/>
</dbReference>
<dbReference type="RefSeq" id="WP_012731346.1">
    <property type="nucleotide sequence ID" value="NC_012704.1"/>
</dbReference>
<dbReference type="SMR" id="C4LI04"/>
<dbReference type="STRING" id="645127.ckrop_0698"/>
<dbReference type="KEGG" id="ckp:ckrop_0698"/>
<dbReference type="eggNOG" id="COG0320">
    <property type="taxonomic scope" value="Bacteria"/>
</dbReference>
<dbReference type="HOGENOM" id="CLU_033144_2_1_11"/>
<dbReference type="OrthoDB" id="9787898at2"/>
<dbReference type="UniPathway" id="UPA00538">
    <property type="reaction ID" value="UER00593"/>
</dbReference>
<dbReference type="Proteomes" id="UP000001473">
    <property type="component" value="Chromosome"/>
</dbReference>
<dbReference type="GO" id="GO:0005737">
    <property type="term" value="C:cytoplasm"/>
    <property type="evidence" value="ECO:0007669"/>
    <property type="project" value="UniProtKB-SubCell"/>
</dbReference>
<dbReference type="GO" id="GO:0051539">
    <property type="term" value="F:4 iron, 4 sulfur cluster binding"/>
    <property type="evidence" value="ECO:0007669"/>
    <property type="project" value="UniProtKB-UniRule"/>
</dbReference>
<dbReference type="GO" id="GO:0016992">
    <property type="term" value="F:lipoate synthase activity"/>
    <property type="evidence" value="ECO:0007669"/>
    <property type="project" value="UniProtKB-UniRule"/>
</dbReference>
<dbReference type="GO" id="GO:0046872">
    <property type="term" value="F:metal ion binding"/>
    <property type="evidence" value="ECO:0007669"/>
    <property type="project" value="UniProtKB-KW"/>
</dbReference>
<dbReference type="CDD" id="cd01335">
    <property type="entry name" value="Radical_SAM"/>
    <property type="match status" value="1"/>
</dbReference>
<dbReference type="Gene3D" id="3.20.20.70">
    <property type="entry name" value="Aldolase class I"/>
    <property type="match status" value="1"/>
</dbReference>
<dbReference type="HAMAP" id="MF_00206">
    <property type="entry name" value="Lipoyl_synth"/>
    <property type="match status" value="1"/>
</dbReference>
<dbReference type="InterPro" id="IPR013785">
    <property type="entry name" value="Aldolase_TIM"/>
</dbReference>
<dbReference type="InterPro" id="IPR006638">
    <property type="entry name" value="Elp3/MiaA/NifB-like_rSAM"/>
</dbReference>
<dbReference type="InterPro" id="IPR003698">
    <property type="entry name" value="Lipoyl_synth"/>
</dbReference>
<dbReference type="InterPro" id="IPR007197">
    <property type="entry name" value="rSAM"/>
</dbReference>
<dbReference type="NCBIfam" id="TIGR00510">
    <property type="entry name" value="lipA"/>
    <property type="match status" value="1"/>
</dbReference>
<dbReference type="NCBIfam" id="NF004019">
    <property type="entry name" value="PRK05481.1"/>
    <property type="match status" value="1"/>
</dbReference>
<dbReference type="NCBIfam" id="NF009544">
    <property type="entry name" value="PRK12928.1"/>
    <property type="match status" value="1"/>
</dbReference>
<dbReference type="PANTHER" id="PTHR10949">
    <property type="entry name" value="LIPOYL SYNTHASE"/>
    <property type="match status" value="1"/>
</dbReference>
<dbReference type="PANTHER" id="PTHR10949:SF0">
    <property type="entry name" value="LIPOYL SYNTHASE, MITOCHONDRIAL"/>
    <property type="match status" value="1"/>
</dbReference>
<dbReference type="Pfam" id="PF04055">
    <property type="entry name" value="Radical_SAM"/>
    <property type="match status" value="1"/>
</dbReference>
<dbReference type="PIRSF" id="PIRSF005963">
    <property type="entry name" value="Lipoyl_synth"/>
    <property type="match status" value="1"/>
</dbReference>
<dbReference type="SFLD" id="SFLDF00271">
    <property type="entry name" value="lipoyl_synthase"/>
    <property type="match status" value="1"/>
</dbReference>
<dbReference type="SFLD" id="SFLDS00029">
    <property type="entry name" value="Radical_SAM"/>
    <property type="match status" value="1"/>
</dbReference>
<dbReference type="SMART" id="SM00729">
    <property type="entry name" value="Elp3"/>
    <property type="match status" value="1"/>
</dbReference>
<dbReference type="SUPFAM" id="SSF102114">
    <property type="entry name" value="Radical SAM enzymes"/>
    <property type="match status" value="1"/>
</dbReference>
<dbReference type="PROSITE" id="PS51918">
    <property type="entry name" value="RADICAL_SAM"/>
    <property type="match status" value="1"/>
</dbReference>
<keyword id="KW-0004">4Fe-4S</keyword>
<keyword id="KW-0963">Cytoplasm</keyword>
<keyword id="KW-0408">Iron</keyword>
<keyword id="KW-0411">Iron-sulfur</keyword>
<keyword id="KW-0479">Metal-binding</keyword>
<keyword id="KW-1185">Reference proteome</keyword>
<keyword id="KW-0949">S-adenosyl-L-methionine</keyword>
<keyword id="KW-0808">Transferase</keyword>
<protein>
    <recommendedName>
        <fullName evidence="1">Lipoyl synthase</fullName>
        <ecNumber evidence="1">2.8.1.8</ecNumber>
    </recommendedName>
    <alternativeName>
        <fullName evidence="1">Lip-syn</fullName>
        <shortName evidence="1">LS</shortName>
    </alternativeName>
    <alternativeName>
        <fullName evidence="1">Lipoate synthase</fullName>
    </alternativeName>
    <alternativeName>
        <fullName evidence="1">Lipoic acid synthase</fullName>
    </alternativeName>
    <alternativeName>
        <fullName evidence="1">Sulfur insertion protein LipA</fullName>
    </alternativeName>
</protein>
<organism>
    <name type="scientific">Corynebacterium kroppenstedtii (strain DSM 44385 / JCM 11950 / CIP 105744 / CCUG 35717)</name>
    <dbReference type="NCBI Taxonomy" id="645127"/>
    <lineage>
        <taxon>Bacteria</taxon>
        <taxon>Bacillati</taxon>
        <taxon>Actinomycetota</taxon>
        <taxon>Actinomycetes</taxon>
        <taxon>Mycobacteriales</taxon>
        <taxon>Corynebacteriaceae</taxon>
        <taxon>Corynebacterium</taxon>
    </lineage>
</organism>
<feature type="chain" id="PRO_1000204145" description="Lipoyl synthase">
    <location>
        <begin position="1"/>
        <end position="347"/>
    </location>
</feature>
<feature type="domain" description="Radical SAM core" evidence="2">
    <location>
        <begin position="67"/>
        <end position="281"/>
    </location>
</feature>
<feature type="binding site" evidence="1">
    <location>
        <position position="55"/>
    </location>
    <ligand>
        <name>[4Fe-4S] cluster</name>
        <dbReference type="ChEBI" id="CHEBI:49883"/>
        <label>1</label>
    </ligand>
</feature>
<feature type="binding site" evidence="1">
    <location>
        <position position="60"/>
    </location>
    <ligand>
        <name>[4Fe-4S] cluster</name>
        <dbReference type="ChEBI" id="CHEBI:49883"/>
        <label>1</label>
    </ligand>
</feature>
<feature type="binding site" evidence="1">
    <location>
        <position position="66"/>
    </location>
    <ligand>
        <name>[4Fe-4S] cluster</name>
        <dbReference type="ChEBI" id="CHEBI:49883"/>
        <label>1</label>
    </ligand>
</feature>
<feature type="binding site" evidence="1">
    <location>
        <position position="81"/>
    </location>
    <ligand>
        <name>[4Fe-4S] cluster</name>
        <dbReference type="ChEBI" id="CHEBI:49883"/>
        <label>2</label>
        <note>4Fe-4S-S-AdoMet</note>
    </ligand>
</feature>
<feature type="binding site" evidence="1">
    <location>
        <position position="85"/>
    </location>
    <ligand>
        <name>[4Fe-4S] cluster</name>
        <dbReference type="ChEBI" id="CHEBI:49883"/>
        <label>2</label>
        <note>4Fe-4S-S-AdoMet</note>
    </ligand>
</feature>
<feature type="binding site" evidence="1">
    <location>
        <position position="88"/>
    </location>
    <ligand>
        <name>[4Fe-4S] cluster</name>
        <dbReference type="ChEBI" id="CHEBI:49883"/>
        <label>2</label>
        <note>4Fe-4S-S-AdoMet</note>
    </ligand>
</feature>
<feature type="binding site" evidence="1">
    <location>
        <position position="292"/>
    </location>
    <ligand>
        <name>[4Fe-4S] cluster</name>
        <dbReference type="ChEBI" id="CHEBI:49883"/>
        <label>1</label>
    </ligand>
</feature>
<proteinExistence type="inferred from homology"/>